<proteinExistence type="evidence at protein level"/>
<organism>
    <name type="scientific">Saccharomyces cerevisiae (strain ATCC 204508 / S288c)</name>
    <name type="common">Baker's yeast</name>
    <dbReference type="NCBI Taxonomy" id="559292"/>
    <lineage>
        <taxon>Eukaryota</taxon>
        <taxon>Fungi</taxon>
        <taxon>Dikarya</taxon>
        <taxon>Ascomycota</taxon>
        <taxon>Saccharomycotina</taxon>
        <taxon>Saccharomycetes</taxon>
        <taxon>Saccharomycetales</taxon>
        <taxon>Saccharomycetaceae</taxon>
        <taxon>Saccharomyces</taxon>
    </lineage>
</organism>
<dbReference type="EMBL" id="U28372">
    <property type="protein sequence ID" value="AAB64796.1"/>
    <property type="molecule type" value="Genomic_DNA"/>
</dbReference>
<dbReference type="EMBL" id="BK006938">
    <property type="protein sequence ID" value="DAA12200.1"/>
    <property type="molecule type" value="Genomic_DNA"/>
</dbReference>
<dbReference type="PIR" id="S61157">
    <property type="entry name" value="S61157"/>
</dbReference>
<dbReference type="RefSeq" id="NP_010649.1">
    <property type="nucleotide sequence ID" value="NM_001180670.1"/>
</dbReference>
<dbReference type="PDB" id="2J04">
    <property type="method" value="X-ray"/>
    <property type="resolution" value="3.20 A"/>
    <property type="chains" value="B/D=159-672"/>
</dbReference>
<dbReference type="PDB" id="8FFZ">
    <property type="method" value="EM"/>
    <property type="resolution" value="3.80 A"/>
    <property type="chains" value="E=1-672"/>
</dbReference>
<dbReference type="PDB" id="9GC3">
    <property type="method" value="EM"/>
    <property type="resolution" value="2.46 A"/>
    <property type="chains" value="B=1-672"/>
</dbReference>
<dbReference type="PDBsum" id="2J04"/>
<dbReference type="PDBsum" id="8FFZ"/>
<dbReference type="PDBsum" id="9GC3"/>
<dbReference type="EMDB" id="EMD-29071"/>
<dbReference type="EMDB" id="EMD-51228"/>
<dbReference type="SMR" id="Q06339"/>
<dbReference type="BioGRID" id="32417">
    <property type="interactions" value="512"/>
</dbReference>
<dbReference type="ComplexPortal" id="CPX-1656">
    <property type="entry name" value="General transcription factor TFIIIC complex"/>
</dbReference>
<dbReference type="DIP" id="DIP-2952N"/>
<dbReference type="FunCoup" id="Q06339">
    <property type="interactions" value="276"/>
</dbReference>
<dbReference type="IntAct" id="Q06339">
    <property type="interactions" value="10"/>
</dbReference>
<dbReference type="MINT" id="Q06339"/>
<dbReference type="STRING" id="4932.YDR362C"/>
<dbReference type="iPTMnet" id="Q06339"/>
<dbReference type="PaxDb" id="4932-YDR362C"/>
<dbReference type="PeptideAtlas" id="Q06339"/>
<dbReference type="EnsemblFungi" id="YDR362C_mRNA">
    <property type="protein sequence ID" value="YDR362C"/>
    <property type="gene ID" value="YDR362C"/>
</dbReference>
<dbReference type="GeneID" id="851964"/>
<dbReference type="KEGG" id="sce:YDR362C"/>
<dbReference type="AGR" id="SGD:S000002770"/>
<dbReference type="SGD" id="S000002770">
    <property type="gene designation" value="TFC6"/>
</dbReference>
<dbReference type="VEuPathDB" id="FungiDB:YDR362C"/>
<dbReference type="eggNOG" id="ENOG502S1WJ">
    <property type="taxonomic scope" value="Eukaryota"/>
</dbReference>
<dbReference type="HOGENOM" id="CLU_023122_0_0_1"/>
<dbReference type="InParanoid" id="Q06339"/>
<dbReference type="OMA" id="RLWKWDY"/>
<dbReference type="OrthoDB" id="4703at2759"/>
<dbReference type="BioCyc" id="YEAST:G3O-29912-MONOMER"/>
<dbReference type="Reactome" id="R-SCE-76066">
    <property type="pathway name" value="RNA Polymerase III Transcription Initiation From Type 2 Promoter"/>
</dbReference>
<dbReference type="BioGRID-ORCS" id="851964">
    <property type="hits" value="4 hits in 10 CRISPR screens"/>
</dbReference>
<dbReference type="EvolutionaryTrace" id="Q06339"/>
<dbReference type="PRO" id="PR:Q06339"/>
<dbReference type="Proteomes" id="UP000002311">
    <property type="component" value="Chromosome IV"/>
</dbReference>
<dbReference type="RNAct" id="Q06339">
    <property type="molecule type" value="protein"/>
</dbReference>
<dbReference type="GO" id="GO:0005634">
    <property type="term" value="C:nucleus"/>
    <property type="evidence" value="ECO:0000303"/>
    <property type="project" value="ComplexPortal"/>
</dbReference>
<dbReference type="GO" id="GO:0000127">
    <property type="term" value="C:transcription factor TFIIIC complex"/>
    <property type="evidence" value="ECO:0000314"/>
    <property type="project" value="SGD"/>
</dbReference>
<dbReference type="GO" id="GO:0003677">
    <property type="term" value="F:DNA binding"/>
    <property type="evidence" value="ECO:0007669"/>
    <property type="project" value="UniProtKB-KW"/>
</dbReference>
<dbReference type="GO" id="GO:0000995">
    <property type="term" value="F:RNA polymerase III general transcription initiation factor activity"/>
    <property type="evidence" value="ECO:0000247"/>
    <property type="project" value="SGD"/>
</dbReference>
<dbReference type="GO" id="GO:0042791">
    <property type="term" value="P:5S class rRNA transcription by RNA polymerase III"/>
    <property type="evidence" value="ECO:0000314"/>
    <property type="project" value="SGD"/>
</dbReference>
<dbReference type="GO" id="GO:0006383">
    <property type="term" value="P:transcription by RNA polymerase III"/>
    <property type="evidence" value="ECO:0000314"/>
    <property type="project" value="SGD"/>
</dbReference>
<dbReference type="GO" id="GO:0006384">
    <property type="term" value="P:transcription initiation at RNA polymerase III promoter"/>
    <property type="evidence" value="ECO:0000303"/>
    <property type="project" value="ComplexPortal"/>
</dbReference>
<dbReference type="Gene3D" id="2.130.10.10">
    <property type="entry name" value="YVTN repeat-like/Quinoprotein amine dehydrogenase"/>
    <property type="match status" value="1"/>
</dbReference>
<dbReference type="InterPro" id="IPR052416">
    <property type="entry name" value="GTF3C_component"/>
</dbReference>
<dbReference type="InterPro" id="IPR015943">
    <property type="entry name" value="WD40/YVTN_repeat-like_dom_sf"/>
</dbReference>
<dbReference type="InterPro" id="IPR036322">
    <property type="entry name" value="WD40_repeat_dom_sf"/>
</dbReference>
<dbReference type="PANTHER" id="PTHR15052:SF2">
    <property type="entry name" value="GENERAL TRANSCRIPTION FACTOR 3C POLYPEPTIDE 2"/>
    <property type="match status" value="1"/>
</dbReference>
<dbReference type="PANTHER" id="PTHR15052">
    <property type="entry name" value="RNA POLYMERASE III TRANSCRIPTION INITIATION FACTOR COMPLEX SUBUNIT"/>
    <property type="match status" value="1"/>
</dbReference>
<dbReference type="SUPFAM" id="SSF50978">
    <property type="entry name" value="WD40 repeat-like"/>
    <property type="match status" value="1"/>
</dbReference>
<protein>
    <recommendedName>
        <fullName>Transcription factor tau 91 kDa subunit</fullName>
    </recommendedName>
    <alternativeName>
        <fullName>TFIIIC 91 kDa subunit</fullName>
    </alternativeName>
    <alternativeName>
        <fullName>Transcription factor C subunit 6</fullName>
    </alternativeName>
</protein>
<accession>Q06339</accession>
<accession>D6VSZ0</accession>
<keyword id="KW-0002">3D-structure</keyword>
<keyword id="KW-0903">Direct protein sequencing</keyword>
<keyword id="KW-1015">Disulfide bond</keyword>
<keyword id="KW-0238">DNA-binding</keyword>
<keyword id="KW-0539">Nucleus</keyword>
<keyword id="KW-1185">Reference proteome</keyword>
<keyword id="KW-0804">Transcription</keyword>
<keyword id="KW-0805">Transcription regulation</keyword>
<evidence type="ECO:0000256" key="1">
    <source>
        <dbReference type="SAM" id="MobiDB-lite"/>
    </source>
</evidence>
<evidence type="ECO:0000269" key="2">
    <source>
    </source>
</evidence>
<evidence type="ECO:0000269" key="3">
    <source>
    </source>
</evidence>
<evidence type="ECO:0000269" key="4">
    <source>
    </source>
</evidence>
<evidence type="ECO:0000269" key="5">
    <source>
    </source>
</evidence>
<evidence type="ECO:0000269" key="6">
    <source>
    </source>
</evidence>
<evidence type="ECO:0000269" key="7">
    <source>
    </source>
</evidence>
<evidence type="ECO:0000269" key="8">
    <source>
    </source>
</evidence>
<evidence type="ECO:0000269" key="9">
    <source>
    </source>
</evidence>
<evidence type="ECO:0007829" key="10">
    <source>
        <dbReference type="PDB" id="2J04"/>
    </source>
</evidence>
<evidence type="ECO:0007829" key="11">
    <source>
        <dbReference type="PDB" id="9GC3"/>
    </source>
</evidence>
<reference key="1">
    <citation type="journal article" date="1997" name="Nature">
        <title>The nucleotide sequence of Saccharomyces cerevisiae chromosome IV.</title>
        <authorList>
            <person name="Jacq C."/>
            <person name="Alt-Moerbe J."/>
            <person name="Andre B."/>
            <person name="Arnold W."/>
            <person name="Bahr A."/>
            <person name="Ballesta J.P.G."/>
            <person name="Bargues M."/>
            <person name="Baron L."/>
            <person name="Becker A."/>
            <person name="Biteau N."/>
            <person name="Bloecker H."/>
            <person name="Blugeon C."/>
            <person name="Boskovic J."/>
            <person name="Brandt P."/>
            <person name="Brueckner M."/>
            <person name="Buitrago M.J."/>
            <person name="Coster F."/>
            <person name="Delaveau T."/>
            <person name="del Rey F."/>
            <person name="Dujon B."/>
            <person name="Eide L.G."/>
            <person name="Garcia-Cantalejo J.M."/>
            <person name="Goffeau A."/>
            <person name="Gomez-Peris A."/>
            <person name="Granotier C."/>
            <person name="Hanemann V."/>
            <person name="Hankeln T."/>
            <person name="Hoheisel J.D."/>
            <person name="Jaeger W."/>
            <person name="Jimenez A."/>
            <person name="Jonniaux J.-L."/>
            <person name="Kraemer C."/>
            <person name="Kuester H."/>
            <person name="Laamanen P."/>
            <person name="Legros Y."/>
            <person name="Louis E.J."/>
            <person name="Moeller-Rieker S."/>
            <person name="Monnet A."/>
            <person name="Moro M."/>
            <person name="Mueller-Auer S."/>
            <person name="Nussbaumer B."/>
            <person name="Paricio N."/>
            <person name="Paulin L."/>
            <person name="Perea J."/>
            <person name="Perez-Alonso M."/>
            <person name="Perez-Ortin J.E."/>
            <person name="Pohl T.M."/>
            <person name="Prydz H."/>
            <person name="Purnelle B."/>
            <person name="Rasmussen S.W."/>
            <person name="Remacha M.A."/>
            <person name="Revuelta J.L."/>
            <person name="Rieger M."/>
            <person name="Salom D."/>
            <person name="Saluz H.P."/>
            <person name="Saiz J.E."/>
            <person name="Saren A.-M."/>
            <person name="Schaefer M."/>
            <person name="Scharfe M."/>
            <person name="Schmidt E.R."/>
            <person name="Schneider C."/>
            <person name="Scholler P."/>
            <person name="Schwarz S."/>
            <person name="Soler-Mira A."/>
            <person name="Urrestarazu L.A."/>
            <person name="Verhasselt P."/>
            <person name="Vissers S."/>
            <person name="Voet M."/>
            <person name="Volckaert G."/>
            <person name="Wagner G."/>
            <person name="Wambutt R."/>
            <person name="Wedler E."/>
            <person name="Wedler H."/>
            <person name="Woelfl S."/>
            <person name="Harris D.E."/>
            <person name="Bowman S."/>
            <person name="Brown D."/>
            <person name="Churcher C.M."/>
            <person name="Connor R."/>
            <person name="Dedman K."/>
            <person name="Gentles S."/>
            <person name="Hamlin N."/>
            <person name="Hunt S."/>
            <person name="Jones L."/>
            <person name="McDonald S."/>
            <person name="Murphy L.D."/>
            <person name="Niblett D."/>
            <person name="Odell C."/>
            <person name="Oliver K."/>
            <person name="Rajandream M.A."/>
            <person name="Richards C."/>
            <person name="Shore L."/>
            <person name="Walsh S.V."/>
            <person name="Barrell B.G."/>
            <person name="Dietrich F.S."/>
            <person name="Mulligan J.T."/>
            <person name="Allen E."/>
            <person name="Araujo R."/>
            <person name="Aviles E."/>
            <person name="Berno A."/>
            <person name="Carpenter J."/>
            <person name="Chen E."/>
            <person name="Cherry J.M."/>
            <person name="Chung E."/>
            <person name="Duncan M."/>
            <person name="Hunicke-Smith S."/>
            <person name="Hyman R.W."/>
            <person name="Komp C."/>
            <person name="Lashkari D."/>
            <person name="Lew H."/>
            <person name="Lin D."/>
            <person name="Mosedale D."/>
            <person name="Nakahara K."/>
            <person name="Namath A."/>
            <person name="Oefner P."/>
            <person name="Oh C."/>
            <person name="Petel F.X."/>
            <person name="Roberts D."/>
            <person name="Schramm S."/>
            <person name="Schroeder M."/>
            <person name="Shogren T."/>
            <person name="Shroff N."/>
            <person name="Winant A."/>
            <person name="Yelton M.A."/>
            <person name="Botstein D."/>
            <person name="Davis R.W."/>
            <person name="Johnston M."/>
            <person name="Andrews S."/>
            <person name="Brinkman R."/>
            <person name="Cooper J."/>
            <person name="Ding H."/>
            <person name="Du Z."/>
            <person name="Favello A."/>
            <person name="Fulton L."/>
            <person name="Gattung S."/>
            <person name="Greco T."/>
            <person name="Hallsworth K."/>
            <person name="Hawkins J."/>
            <person name="Hillier L.W."/>
            <person name="Jier M."/>
            <person name="Johnson D."/>
            <person name="Johnston L."/>
            <person name="Kirsten J."/>
            <person name="Kucaba T."/>
            <person name="Langston Y."/>
            <person name="Latreille P."/>
            <person name="Le T."/>
            <person name="Mardis E."/>
            <person name="Menezes S."/>
            <person name="Miller N."/>
            <person name="Nhan M."/>
            <person name="Pauley A."/>
            <person name="Peluso D."/>
            <person name="Rifkin L."/>
            <person name="Riles L."/>
            <person name="Taich A."/>
            <person name="Trevaskis E."/>
            <person name="Vignati D."/>
            <person name="Wilcox L."/>
            <person name="Wohldman P."/>
            <person name="Vaudin M."/>
            <person name="Wilson R."/>
            <person name="Waterston R."/>
            <person name="Albermann K."/>
            <person name="Hani J."/>
            <person name="Heumann K."/>
            <person name="Kleine K."/>
            <person name="Mewes H.-W."/>
            <person name="Zollner A."/>
            <person name="Zaccaria P."/>
        </authorList>
    </citation>
    <scope>NUCLEOTIDE SEQUENCE [LARGE SCALE GENOMIC DNA]</scope>
    <source>
        <strain>ATCC 204508 / S288c</strain>
    </source>
</reference>
<reference key="2">
    <citation type="journal article" date="2014" name="G3 (Bethesda)">
        <title>The reference genome sequence of Saccharomyces cerevisiae: Then and now.</title>
        <authorList>
            <person name="Engel S.R."/>
            <person name="Dietrich F.S."/>
            <person name="Fisk D.G."/>
            <person name="Binkley G."/>
            <person name="Balakrishnan R."/>
            <person name="Costanzo M.C."/>
            <person name="Dwight S.S."/>
            <person name="Hitz B.C."/>
            <person name="Karra K."/>
            <person name="Nash R.S."/>
            <person name="Weng S."/>
            <person name="Wong E.D."/>
            <person name="Lloyd P."/>
            <person name="Skrzypek M.S."/>
            <person name="Miyasato S.R."/>
            <person name="Simison M."/>
            <person name="Cherry J.M."/>
        </authorList>
    </citation>
    <scope>GENOME REANNOTATION</scope>
    <source>
        <strain>ATCC 204508 / S288c</strain>
    </source>
</reference>
<reference key="3">
    <citation type="journal article" date="2006" name="Protein Expr. Purif.">
        <title>Expression, proteolytic analysis, reconstitution, and crystallization of the tau60/tau91 subcomplex of yeast TFIIIC.</title>
        <authorList>
            <person name="Mylona A."/>
            <person name="Acker J."/>
            <person name="Fernandez-Tornero C."/>
            <person name="Sentenac A."/>
            <person name="Mueller C.W."/>
        </authorList>
    </citation>
    <scope>PROTEIN SEQUENCE OF N-TERMINUS</scope>
    <scope>CRYSTALLIZATION</scope>
    <scope>INTERACTION WITH TFC8</scope>
</reference>
<reference key="4">
    <citation type="journal article" date="1989" name="J. Biol. Chem.">
        <title>Two polypeptide chains in yeast transcription factor tau interact with DNA.</title>
        <authorList>
            <person name="Gabrielsen O.S."/>
            <person name="Marzouki N."/>
            <person name="Ruet A."/>
            <person name="Sentenac A."/>
            <person name="Fromageot P."/>
        </authorList>
    </citation>
    <scope>FUNCTION</scope>
</reference>
<reference key="5">
    <citation type="journal article" date="1993" name="J. Biol. Chem.">
        <title>On the subunit composition, stoichiometry, and phosphorylation of the yeast transcription factor TFIIIC/tau.</title>
        <authorList>
            <person name="Conesa C."/>
            <person name="Swanson R.N."/>
            <person name="Schultz P."/>
            <person name="Oudet P."/>
            <person name="Sentenac A."/>
        </authorList>
    </citation>
    <scope>INTERACTION WITH TFC1; TFC3 AND TFC4</scope>
</reference>
<reference key="6">
    <citation type="journal article" date="1998" name="Mol. Cell. Biol.">
        <title>Tau91, an essential subunit of yeast transcription factor IIIC, cooperates with tau138 in DNA binding.</title>
        <authorList>
            <person name="Arrebola R."/>
            <person name="Manaud N."/>
            <person name="Rozenfeld S."/>
            <person name="Marsolier M.C."/>
            <person name="Lefebvre O."/>
            <person name="Carles C."/>
            <person name="Thuriaux P."/>
            <person name="Conesa C."/>
            <person name="Sentenac A."/>
        </authorList>
    </citation>
    <scope>FUNCTION</scope>
    <scope>IDENTIFICATION IN THE TFIIIC COMPLEX</scope>
</reference>
<reference key="7">
    <citation type="journal article" date="2003" name="J. Biol. Chem.">
        <title>The tau95 subunit of yeast TFIIIC influences upstream and downstream functions of TFIIIC.DNA complexes.</title>
        <authorList>
            <person name="Jourdain S."/>
            <person name="Acker J."/>
            <person name="Ducrot C."/>
            <person name="Sentenac A."/>
            <person name="Lefebvre O."/>
        </authorList>
    </citation>
    <scope>INTERACTION WITH TFC1 AND TFC3</scope>
</reference>
<reference key="8">
    <citation type="journal article" date="2003" name="Nature">
        <title>Global analysis of protein localization in budding yeast.</title>
        <authorList>
            <person name="Huh W.-K."/>
            <person name="Falvo J.V."/>
            <person name="Gerke L.C."/>
            <person name="Carroll A.S."/>
            <person name="Howson R.W."/>
            <person name="Weissman J.S."/>
            <person name="O'Shea E.K."/>
        </authorList>
    </citation>
    <scope>SUBCELLULAR LOCATION [LARGE SCALE ANALYSIS]</scope>
</reference>
<reference key="9">
    <citation type="journal article" date="2003" name="Nature">
        <title>Global analysis of protein expression in yeast.</title>
        <authorList>
            <person name="Ghaemmaghami S."/>
            <person name="Huh W.-K."/>
            <person name="Bower K."/>
            <person name="Howson R.W."/>
            <person name="Belle A."/>
            <person name="Dephoure N."/>
            <person name="O'Shea E.K."/>
            <person name="Weissman J.S."/>
        </authorList>
    </citation>
    <scope>LEVEL OF PROTEIN EXPRESSION [LARGE SCALE ANALYSIS]</scope>
</reference>
<reference key="10">
    <citation type="journal article" date="2008" name="Mol. Cell. Proteomics">
        <title>A multidimensional chromatography technology for in-depth phosphoproteome analysis.</title>
        <authorList>
            <person name="Albuquerque C.P."/>
            <person name="Smolka M.B."/>
            <person name="Payne S.H."/>
            <person name="Bafna V."/>
            <person name="Eng J."/>
            <person name="Zhou H."/>
        </authorList>
    </citation>
    <scope>IDENTIFICATION BY MASS SPECTROMETRY [LARGE SCALE ANALYSIS]</scope>
</reference>
<reference key="11">
    <citation type="journal article" date="2009" name="Science">
        <title>Global analysis of Cdk1 substrate phosphorylation sites provides insights into evolution.</title>
        <authorList>
            <person name="Holt L.J."/>
            <person name="Tuch B.B."/>
            <person name="Villen J."/>
            <person name="Johnson A.D."/>
            <person name="Gygi S.P."/>
            <person name="Morgan D.O."/>
        </authorList>
    </citation>
    <scope>IDENTIFICATION BY MASS SPECTROMETRY [LARGE SCALE ANALYSIS]</scope>
</reference>
<reference key="12">
    <citation type="journal article" date="2006" name="Mol. Cell">
        <title>Structure of the tau60/Delta tau91 subcomplex of yeast transcription factor IIIC: insights into preinitiation complex assembly.</title>
        <authorList>
            <person name="Mylona A."/>
            <person name="Fernandez-Tornero C."/>
            <person name="Legrand P."/>
            <person name="Haupt M."/>
            <person name="Sentenac A."/>
            <person name="Acker J."/>
            <person name="Mueller C.W."/>
        </authorList>
    </citation>
    <scope>X-RAY CRYSTALLOGRAPHY (3.20 ANGSTROMS) OF 159-672 IN COMPLEX WITH TFC8</scope>
    <scope>REGION</scope>
    <scope>DISULFIDE BOND</scope>
</reference>
<sequence>MAVIPAKKRGRPRKSVVAEVPYDSLASPVSENSGSKRPRRNASKKAVANFAQLVHAGRDDVINTTQVNNVDDTDDDDFVLNDEGDGEESDNVEIEFENELESTKNEVADLNSSGSGASVRPSGRRNTVQKLRLKKNSTKNMKSSSPGSSLGQKGRPIRLLKDLSSARDKIERIYGLNKEKLLLLAKVKEGFETSVFDFPFKNIQPDSPYFVCLDPPCKKESAYNKVIGDKNRTVYHEINKTEFENMIKLRTKRLKLLIGEVDAEVSTGDKIEFPVLANGKRRGFIYNVGGLVTDIAWLNIEENTDIGKDIQYLAVAVSQYMDEPLNEHLEMFDKEKHSSCIQIFKMNTSTLHCVKVQTIVHSFGEVWDLKWHEGCHAPHLVGCLSFVSQEGTINFLEIIDNATDVHVFKMCEKPSLTLSLADSLITTFDFLSPTTVVCGFKNGFVAEFDLTDPEVPSFYDQVHDSYILSVSTAYSDFEDTVVSTVAVDGYFYIFNPKDIATTKTTVSRFRGSNLVPVVYCPQIYSYIYSDGASSLRAVPSRAAFAVHPLVSRETTITAIGVSRLHPMVLAGSADGSLIITNAARRLLHGIKNSSATQKSLRLWKWDYSIKDDKYRIDSSYEVYPLTVNDVSKAKIDAHGINITCTKWNETSAGGKCYAFSNSAGLLTLEYLS</sequence>
<name>TFC6_YEAST</name>
<feature type="chain" id="PRO_0000252483" description="Transcription factor tau 91 kDa subunit">
    <location>
        <begin position="1"/>
        <end position="672"/>
    </location>
</feature>
<feature type="DNA-binding region" description="A.T hook">
    <location>
        <begin position="6"/>
        <end position="18"/>
    </location>
</feature>
<feature type="region of interest" description="Required for DNA-binding">
    <location>
        <begin position="1"/>
        <end position="158"/>
    </location>
</feature>
<feature type="region of interest" description="Disordered" evidence="1">
    <location>
        <begin position="24"/>
        <end position="45"/>
    </location>
</feature>
<feature type="region of interest" description="Disordered" evidence="1">
    <location>
        <begin position="67"/>
        <end position="156"/>
    </location>
</feature>
<feature type="region of interest" description="Sufficient for interaction with TFC8" evidence="5">
    <location>
        <begin position="159"/>
        <end position="672"/>
    </location>
</feature>
<feature type="compositionally biased region" description="Acidic residues" evidence="1">
    <location>
        <begin position="71"/>
        <end position="100"/>
    </location>
</feature>
<feature type="disulfide bond" evidence="6">
    <location>
        <begin position="375"/>
        <end position="383"/>
    </location>
</feature>
<feature type="strand" evidence="11">
    <location>
        <begin position="138"/>
        <end position="140"/>
    </location>
</feature>
<feature type="helix" evidence="11">
    <location>
        <begin position="149"/>
        <end position="153"/>
    </location>
</feature>
<feature type="helix" evidence="11">
    <location>
        <begin position="160"/>
        <end position="162"/>
    </location>
</feature>
<feature type="helix" evidence="11">
    <location>
        <begin position="166"/>
        <end position="174"/>
    </location>
</feature>
<feature type="helix" evidence="11">
    <location>
        <begin position="178"/>
        <end position="191"/>
    </location>
</feature>
<feature type="helix" evidence="11">
    <location>
        <begin position="200"/>
        <end position="203"/>
    </location>
</feature>
<feature type="helix" evidence="11">
    <location>
        <begin position="216"/>
        <end position="218"/>
    </location>
</feature>
<feature type="helix" evidence="11">
    <location>
        <begin position="223"/>
        <end position="226"/>
    </location>
</feature>
<feature type="strand" evidence="11">
    <location>
        <begin position="234"/>
        <end position="238"/>
    </location>
</feature>
<feature type="helix" evidence="11">
    <location>
        <begin position="240"/>
        <end position="246"/>
    </location>
</feature>
<feature type="strand" evidence="11">
    <location>
        <begin position="254"/>
        <end position="258"/>
    </location>
</feature>
<feature type="strand" evidence="11">
    <location>
        <begin position="261"/>
        <end position="265"/>
    </location>
</feature>
<feature type="strand" evidence="11">
    <location>
        <begin position="270"/>
        <end position="272"/>
    </location>
</feature>
<feature type="helix" evidence="10">
    <location>
        <begin position="273"/>
        <end position="275"/>
    </location>
</feature>
<feature type="strand" evidence="11">
    <location>
        <begin position="277"/>
        <end position="279"/>
    </location>
</feature>
<feature type="strand" evidence="11">
    <location>
        <begin position="282"/>
        <end position="287"/>
    </location>
</feature>
<feature type="strand" evidence="11">
    <location>
        <begin position="289"/>
        <end position="298"/>
    </location>
</feature>
<feature type="strand" evidence="11">
    <location>
        <begin position="310"/>
        <end position="319"/>
    </location>
</feature>
<feature type="helix" evidence="11">
    <location>
        <begin position="327"/>
        <end position="329"/>
    </location>
</feature>
<feature type="strand" evidence="11">
    <location>
        <begin position="331"/>
        <end position="333"/>
    </location>
</feature>
<feature type="strand" evidence="11">
    <location>
        <begin position="339"/>
        <end position="347"/>
    </location>
</feature>
<feature type="turn" evidence="11">
    <location>
        <begin position="348"/>
        <end position="350"/>
    </location>
</feature>
<feature type="strand" evidence="11">
    <location>
        <begin position="353"/>
        <end position="363"/>
    </location>
</feature>
<feature type="strand" evidence="11">
    <location>
        <begin position="365"/>
        <end position="371"/>
    </location>
</feature>
<feature type="strand" evidence="11">
    <location>
        <begin position="380"/>
        <end position="388"/>
    </location>
</feature>
<feature type="strand" evidence="11">
    <location>
        <begin position="393"/>
        <end position="399"/>
    </location>
</feature>
<feature type="strand" evidence="11">
    <location>
        <begin position="402"/>
        <end position="405"/>
    </location>
</feature>
<feature type="strand" evidence="11">
    <location>
        <begin position="407"/>
        <end position="413"/>
    </location>
</feature>
<feature type="strand" evidence="11">
    <location>
        <begin position="415"/>
        <end position="418"/>
    </location>
</feature>
<feature type="turn" evidence="10">
    <location>
        <begin position="421"/>
        <end position="423"/>
    </location>
</feature>
<feature type="strand" evidence="11">
    <location>
        <begin position="425"/>
        <end position="440"/>
    </location>
</feature>
<feature type="strand" evidence="11">
    <location>
        <begin position="443"/>
        <end position="449"/>
    </location>
</feature>
<feature type="strand" evidence="11">
    <location>
        <begin position="457"/>
        <end position="461"/>
    </location>
</feature>
<feature type="strand" evidence="10">
    <location>
        <begin position="463"/>
        <end position="465"/>
    </location>
</feature>
<feature type="strand" evidence="11">
    <location>
        <begin position="467"/>
        <end position="473"/>
    </location>
</feature>
<feature type="strand" evidence="11">
    <location>
        <begin position="476"/>
        <end position="478"/>
    </location>
</feature>
<feature type="strand" evidence="11">
    <location>
        <begin position="481"/>
        <end position="486"/>
    </location>
</feature>
<feature type="strand" evidence="11">
    <location>
        <begin position="490"/>
        <end position="494"/>
    </location>
</feature>
<feature type="helix" evidence="10">
    <location>
        <begin position="496"/>
        <end position="498"/>
    </location>
</feature>
<feature type="helix" evidence="11">
    <location>
        <begin position="499"/>
        <end position="502"/>
    </location>
</feature>
<feature type="strand" evidence="11">
    <location>
        <begin position="504"/>
        <end position="508"/>
    </location>
</feature>
<feature type="strand" evidence="11">
    <location>
        <begin position="517"/>
        <end position="520"/>
    </location>
</feature>
<feature type="helix" evidence="11">
    <location>
        <begin position="521"/>
        <end position="523"/>
    </location>
</feature>
<feature type="strand" evidence="11">
    <location>
        <begin position="525"/>
        <end position="529"/>
    </location>
</feature>
<feature type="strand" evidence="11">
    <location>
        <begin position="531"/>
        <end position="541"/>
    </location>
</feature>
<feature type="strand" evidence="11">
    <location>
        <begin position="547"/>
        <end position="551"/>
    </location>
</feature>
<feature type="strand" evidence="11">
    <location>
        <begin position="556"/>
        <end position="560"/>
    </location>
</feature>
<feature type="strand" evidence="11">
    <location>
        <begin position="567"/>
        <end position="572"/>
    </location>
</feature>
<feature type="strand" evidence="11">
    <location>
        <begin position="575"/>
        <end position="581"/>
    </location>
</feature>
<feature type="helix" evidence="11">
    <location>
        <begin position="582"/>
        <end position="584"/>
    </location>
</feature>
<feature type="turn" evidence="11">
    <location>
        <begin position="585"/>
        <end position="587"/>
    </location>
</feature>
<feature type="helix" evidence="11">
    <location>
        <begin position="593"/>
        <end position="596"/>
    </location>
</feature>
<feature type="strand" evidence="11">
    <location>
        <begin position="598"/>
        <end position="608"/>
    </location>
</feature>
<feature type="turn" evidence="11">
    <location>
        <begin position="609"/>
        <end position="612"/>
    </location>
</feature>
<feature type="strand" evidence="11">
    <location>
        <begin position="613"/>
        <end position="617"/>
    </location>
</feature>
<feature type="strand" evidence="11">
    <location>
        <begin position="621"/>
        <end position="624"/>
    </location>
</feature>
<feature type="turn" evidence="11">
    <location>
        <begin position="638"/>
        <end position="640"/>
    </location>
</feature>
<feature type="strand" evidence="11">
    <location>
        <begin position="641"/>
        <end position="647"/>
    </location>
</feature>
<feature type="turn" evidence="11">
    <location>
        <begin position="651"/>
        <end position="655"/>
    </location>
</feature>
<feature type="strand" evidence="11">
    <location>
        <begin position="656"/>
        <end position="661"/>
    </location>
</feature>
<feature type="strand" evidence="11">
    <location>
        <begin position="665"/>
        <end position="670"/>
    </location>
</feature>
<gene>
    <name type="primary">TFC6</name>
    <name type="ordered locus">YDR362C</name>
</gene>
<comment type="function">
    <text evidence="7 9">TFIIIC mediates tRNA and 5S RNA gene activation by binding to intragenic promoter elements. Upstream of the transcription start site, TFIIIC assembles the initiation complex TFIIIB-TFIIIC-tDNA, which is sufficient for RNA polymerase III recruitment and function. Part of the tauB domain of TFIIIC that binds boxB DNA promoter sites of tRNA and similar genes. Cooperates with TFC3 in DNA binding.</text>
</comment>
<comment type="subunit">
    <text evidence="2 5 6 8 9">Heterodimer with TFC8. Component of the TFIIIC complex composed of TFC1, TFC3, TFC4, TFC6, TFC7 and TFC8. The subunits are organized in two globular domains, tauA and tauB, connected by a proteolysis-sensitive and flexible linker. Interacts with TFC1, TFC3, TFC4 and directly with TFC8.</text>
</comment>
<comment type="subcellular location">
    <subcellularLocation>
        <location evidence="3">Nucleus</location>
    </subcellularLocation>
</comment>
<comment type="miscellaneous">
    <text evidence="4">Present with 1130 molecules/cell in log phase SD medium.</text>
</comment>